<gene>
    <name evidence="1" type="primary">dtd</name>
    <name type="ordered locus">Sfri_0332</name>
</gene>
<evidence type="ECO:0000255" key="1">
    <source>
        <dbReference type="HAMAP-Rule" id="MF_00518"/>
    </source>
</evidence>
<accession>Q088X0</accession>
<protein>
    <recommendedName>
        <fullName evidence="1">D-aminoacyl-tRNA deacylase</fullName>
        <shortName evidence="1">DTD</shortName>
        <ecNumber evidence="1">3.1.1.96</ecNumber>
    </recommendedName>
    <alternativeName>
        <fullName evidence="1">Gly-tRNA(Ala) deacylase</fullName>
    </alternativeName>
</protein>
<organism>
    <name type="scientific">Shewanella frigidimarina (strain NCIMB 400)</name>
    <dbReference type="NCBI Taxonomy" id="318167"/>
    <lineage>
        <taxon>Bacteria</taxon>
        <taxon>Pseudomonadati</taxon>
        <taxon>Pseudomonadota</taxon>
        <taxon>Gammaproteobacteria</taxon>
        <taxon>Alteromonadales</taxon>
        <taxon>Shewanellaceae</taxon>
        <taxon>Shewanella</taxon>
    </lineage>
</organism>
<sequence>MIALIQRVKRASVSVDNTIVGKIDQGLLVLLGIEREDNIEKMVKLATKVINYRVFSDEDGKMNLNLAQVGGQLLVVSQFTLAADTGKGLRPSFSCAATPEQADRLYLAFVEYCRQQGVMTQTGQFGADMQVELVNDGPVTFNLQV</sequence>
<dbReference type="EC" id="3.1.1.96" evidence="1"/>
<dbReference type="EMBL" id="CP000447">
    <property type="protein sequence ID" value="ABI70195.1"/>
    <property type="molecule type" value="Genomic_DNA"/>
</dbReference>
<dbReference type="RefSeq" id="WP_011635822.1">
    <property type="nucleotide sequence ID" value="NC_008345.1"/>
</dbReference>
<dbReference type="SMR" id="Q088X0"/>
<dbReference type="STRING" id="318167.Sfri_0332"/>
<dbReference type="KEGG" id="sfr:Sfri_0332"/>
<dbReference type="eggNOG" id="COG1490">
    <property type="taxonomic scope" value="Bacteria"/>
</dbReference>
<dbReference type="HOGENOM" id="CLU_076901_1_0_6"/>
<dbReference type="OrthoDB" id="9801395at2"/>
<dbReference type="Proteomes" id="UP000000684">
    <property type="component" value="Chromosome"/>
</dbReference>
<dbReference type="GO" id="GO:0005737">
    <property type="term" value="C:cytoplasm"/>
    <property type="evidence" value="ECO:0007669"/>
    <property type="project" value="UniProtKB-SubCell"/>
</dbReference>
<dbReference type="GO" id="GO:0051500">
    <property type="term" value="F:D-tyrosyl-tRNA(Tyr) deacylase activity"/>
    <property type="evidence" value="ECO:0007669"/>
    <property type="project" value="TreeGrafter"/>
</dbReference>
<dbReference type="GO" id="GO:0106026">
    <property type="term" value="F:Gly-tRNA(Ala) deacylase activity"/>
    <property type="evidence" value="ECO:0007669"/>
    <property type="project" value="UniProtKB-UniRule"/>
</dbReference>
<dbReference type="GO" id="GO:0043908">
    <property type="term" value="F:Ser(Gly)-tRNA(Ala) hydrolase activity"/>
    <property type="evidence" value="ECO:0007669"/>
    <property type="project" value="UniProtKB-UniRule"/>
</dbReference>
<dbReference type="GO" id="GO:0000049">
    <property type="term" value="F:tRNA binding"/>
    <property type="evidence" value="ECO:0007669"/>
    <property type="project" value="UniProtKB-UniRule"/>
</dbReference>
<dbReference type="GO" id="GO:0019478">
    <property type="term" value="P:D-amino acid catabolic process"/>
    <property type="evidence" value="ECO:0007669"/>
    <property type="project" value="UniProtKB-UniRule"/>
</dbReference>
<dbReference type="CDD" id="cd00563">
    <property type="entry name" value="Dtyr_deacylase"/>
    <property type="match status" value="1"/>
</dbReference>
<dbReference type="FunFam" id="3.50.80.10:FF:000001">
    <property type="entry name" value="D-aminoacyl-tRNA deacylase"/>
    <property type="match status" value="1"/>
</dbReference>
<dbReference type="Gene3D" id="3.50.80.10">
    <property type="entry name" value="D-tyrosyl-tRNA(Tyr) deacylase"/>
    <property type="match status" value="1"/>
</dbReference>
<dbReference type="HAMAP" id="MF_00518">
    <property type="entry name" value="Deacylase_Dtd"/>
    <property type="match status" value="1"/>
</dbReference>
<dbReference type="InterPro" id="IPR003732">
    <property type="entry name" value="Daa-tRNA_deacyls_DTD"/>
</dbReference>
<dbReference type="InterPro" id="IPR023509">
    <property type="entry name" value="DTD-like_sf"/>
</dbReference>
<dbReference type="NCBIfam" id="TIGR00256">
    <property type="entry name" value="D-aminoacyl-tRNA deacylase"/>
    <property type="match status" value="1"/>
</dbReference>
<dbReference type="PANTHER" id="PTHR10472:SF5">
    <property type="entry name" value="D-AMINOACYL-TRNA DEACYLASE 1"/>
    <property type="match status" value="1"/>
</dbReference>
<dbReference type="PANTHER" id="PTHR10472">
    <property type="entry name" value="D-TYROSYL-TRNA TYR DEACYLASE"/>
    <property type="match status" value="1"/>
</dbReference>
<dbReference type="Pfam" id="PF02580">
    <property type="entry name" value="Tyr_Deacylase"/>
    <property type="match status" value="1"/>
</dbReference>
<dbReference type="SUPFAM" id="SSF69500">
    <property type="entry name" value="DTD-like"/>
    <property type="match status" value="1"/>
</dbReference>
<proteinExistence type="inferred from homology"/>
<feature type="chain" id="PRO_1000050883" description="D-aminoacyl-tRNA deacylase">
    <location>
        <begin position="1"/>
        <end position="145"/>
    </location>
</feature>
<feature type="short sequence motif" description="Gly-cisPro motif, important for rejection of L-amino acids" evidence="1">
    <location>
        <begin position="137"/>
        <end position="138"/>
    </location>
</feature>
<comment type="function">
    <text evidence="1">An aminoacyl-tRNA editing enzyme that deacylates mischarged D-aminoacyl-tRNAs. Also deacylates mischarged glycyl-tRNA(Ala), protecting cells against glycine mischarging by AlaRS. Acts via tRNA-based rather than protein-based catalysis; rejects L-amino acids rather than detecting D-amino acids in the active site. By recycling D-aminoacyl-tRNA to D-amino acids and free tRNA molecules, this enzyme counteracts the toxicity associated with the formation of D-aminoacyl-tRNA entities in vivo and helps enforce protein L-homochirality.</text>
</comment>
<comment type="catalytic activity">
    <reaction evidence="1">
        <text>glycyl-tRNA(Ala) + H2O = tRNA(Ala) + glycine + H(+)</text>
        <dbReference type="Rhea" id="RHEA:53744"/>
        <dbReference type="Rhea" id="RHEA-COMP:9657"/>
        <dbReference type="Rhea" id="RHEA-COMP:13640"/>
        <dbReference type="ChEBI" id="CHEBI:15377"/>
        <dbReference type="ChEBI" id="CHEBI:15378"/>
        <dbReference type="ChEBI" id="CHEBI:57305"/>
        <dbReference type="ChEBI" id="CHEBI:78442"/>
        <dbReference type="ChEBI" id="CHEBI:78522"/>
        <dbReference type="EC" id="3.1.1.96"/>
    </reaction>
</comment>
<comment type="catalytic activity">
    <reaction evidence="1">
        <text>a D-aminoacyl-tRNA + H2O = a tRNA + a D-alpha-amino acid + H(+)</text>
        <dbReference type="Rhea" id="RHEA:13953"/>
        <dbReference type="Rhea" id="RHEA-COMP:10123"/>
        <dbReference type="Rhea" id="RHEA-COMP:10124"/>
        <dbReference type="ChEBI" id="CHEBI:15377"/>
        <dbReference type="ChEBI" id="CHEBI:15378"/>
        <dbReference type="ChEBI" id="CHEBI:59871"/>
        <dbReference type="ChEBI" id="CHEBI:78442"/>
        <dbReference type="ChEBI" id="CHEBI:79333"/>
        <dbReference type="EC" id="3.1.1.96"/>
    </reaction>
</comment>
<comment type="subunit">
    <text evidence="1">Homodimer.</text>
</comment>
<comment type="subcellular location">
    <subcellularLocation>
        <location evidence="1">Cytoplasm</location>
    </subcellularLocation>
</comment>
<comment type="domain">
    <text evidence="1">A Gly-cisPro motif from one monomer fits into the active site of the other monomer to allow specific chiral rejection of L-amino acids.</text>
</comment>
<comment type="similarity">
    <text evidence="1">Belongs to the DTD family.</text>
</comment>
<keyword id="KW-0963">Cytoplasm</keyword>
<keyword id="KW-0378">Hydrolase</keyword>
<keyword id="KW-1185">Reference proteome</keyword>
<keyword id="KW-0694">RNA-binding</keyword>
<keyword id="KW-0820">tRNA-binding</keyword>
<reference key="1">
    <citation type="submission" date="2006-08" db="EMBL/GenBank/DDBJ databases">
        <title>Complete sequence of Shewanella frigidimarina NCIMB 400.</title>
        <authorList>
            <consortium name="US DOE Joint Genome Institute"/>
            <person name="Copeland A."/>
            <person name="Lucas S."/>
            <person name="Lapidus A."/>
            <person name="Barry K."/>
            <person name="Detter J.C."/>
            <person name="Glavina del Rio T."/>
            <person name="Hammon N."/>
            <person name="Israni S."/>
            <person name="Dalin E."/>
            <person name="Tice H."/>
            <person name="Pitluck S."/>
            <person name="Fredrickson J.K."/>
            <person name="Kolker E."/>
            <person name="McCuel L.A."/>
            <person name="DiChristina T."/>
            <person name="Nealson K.H."/>
            <person name="Newman D."/>
            <person name="Tiedje J.M."/>
            <person name="Zhou J."/>
            <person name="Romine M.F."/>
            <person name="Culley D.E."/>
            <person name="Serres M."/>
            <person name="Chertkov O."/>
            <person name="Brettin T."/>
            <person name="Bruce D."/>
            <person name="Han C."/>
            <person name="Tapia R."/>
            <person name="Gilna P."/>
            <person name="Schmutz J."/>
            <person name="Larimer F."/>
            <person name="Land M."/>
            <person name="Hauser L."/>
            <person name="Kyrpides N."/>
            <person name="Mikhailova N."/>
            <person name="Richardson P."/>
        </authorList>
    </citation>
    <scope>NUCLEOTIDE SEQUENCE [LARGE SCALE GENOMIC DNA]</scope>
    <source>
        <strain>NCIMB 400</strain>
    </source>
</reference>
<name>DTD_SHEFN</name>